<keyword id="KW-0378">Hydrolase</keyword>
<keyword id="KW-0460">Magnesium</keyword>
<keyword id="KW-0464">Manganese</keyword>
<keyword id="KW-0479">Metal-binding</keyword>
<keyword id="KW-0520">NAD</keyword>
<keyword id="KW-0862">Zinc</keyword>
<feature type="chain" id="PRO_1000115247" description="NAD-capped RNA hydrolase NudC">
    <location>
        <begin position="1"/>
        <end position="257"/>
    </location>
</feature>
<feature type="domain" description="Nudix hydrolase" evidence="1">
    <location>
        <begin position="125"/>
        <end position="248"/>
    </location>
</feature>
<feature type="short sequence motif" description="Nudix box" evidence="1">
    <location>
        <begin position="159"/>
        <end position="180"/>
    </location>
</feature>
<feature type="binding site" evidence="1">
    <location>
        <position position="69"/>
    </location>
    <ligand>
        <name>substrate</name>
    </ligand>
</feature>
<feature type="binding site" evidence="1">
    <location>
        <position position="98"/>
    </location>
    <ligand>
        <name>Zn(2+)</name>
        <dbReference type="ChEBI" id="CHEBI:29105"/>
    </ligand>
</feature>
<feature type="binding site" evidence="1">
    <location>
        <position position="101"/>
    </location>
    <ligand>
        <name>Zn(2+)</name>
        <dbReference type="ChEBI" id="CHEBI:29105"/>
    </ligand>
</feature>
<feature type="binding site" evidence="1">
    <location>
        <position position="111"/>
    </location>
    <ligand>
        <name>substrate</name>
    </ligand>
</feature>
<feature type="binding site" evidence="1">
    <location>
        <position position="116"/>
    </location>
    <ligand>
        <name>Zn(2+)</name>
        <dbReference type="ChEBI" id="CHEBI:29105"/>
    </ligand>
</feature>
<feature type="binding site" evidence="1">
    <location>
        <position position="119"/>
    </location>
    <ligand>
        <name>Zn(2+)</name>
        <dbReference type="ChEBI" id="CHEBI:29105"/>
    </ligand>
</feature>
<feature type="binding site" evidence="1">
    <location>
        <position position="124"/>
    </location>
    <ligand>
        <name>substrate</name>
    </ligand>
</feature>
<feature type="binding site" evidence="1">
    <location>
        <position position="158"/>
    </location>
    <ligand>
        <name>a divalent metal cation</name>
        <dbReference type="ChEBI" id="CHEBI:60240"/>
        <label>1</label>
    </ligand>
</feature>
<feature type="binding site" evidence="1">
    <location>
        <position position="174"/>
    </location>
    <ligand>
        <name>a divalent metal cation</name>
        <dbReference type="ChEBI" id="CHEBI:60240"/>
        <label>2</label>
    </ligand>
</feature>
<feature type="binding site" evidence="1">
    <location>
        <position position="174"/>
    </location>
    <ligand>
        <name>a divalent metal cation</name>
        <dbReference type="ChEBI" id="CHEBI:60240"/>
        <label>3</label>
    </ligand>
</feature>
<feature type="binding site" evidence="1">
    <location>
        <position position="178"/>
    </location>
    <ligand>
        <name>a divalent metal cation</name>
        <dbReference type="ChEBI" id="CHEBI:60240"/>
        <label>1</label>
    </ligand>
</feature>
<feature type="binding site" evidence="1">
    <location>
        <position position="178"/>
    </location>
    <ligand>
        <name>a divalent metal cation</name>
        <dbReference type="ChEBI" id="CHEBI:60240"/>
        <label>3</label>
    </ligand>
</feature>
<feature type="binding site" evidence="1">
    <location>
        <begin position="192"/>
        <end position="199"/>
    </location>
    <ligand>
        <name>substrate</name>
    </ligand>
</feature>
<feature type="binding site" evidence="1">
    <location>
        <position position="219"/>
    </location>
    <ligand>
        <name>a divalent metal cation</name>
        <dbReference type="ChEBI" id="CHEBI:60240"/>
        <label>1</label>
    </ligand>
</feature>
<feature type="binding site" evidence="1">
    <location>
        <position position="219"/>
    </location>
    <ligand>
        <name>a divalent metal cation</name>
        <dbReference type="ChEBI" id="CHEBI:60240"/>
        <label>3</label>
    </ligand>
</feature>
<feature type="binding site" evidence="1">
    <location>
        <position position="241"/>
    </location>
    <ligand>
        <name>substrate</name>
    </ligand>
</feature>
<gene>
    <name evidence="1" type="primary">nudC</name>
    <name type="ordered locus">SeD_A4573</name>
</gene>
<reference key="1">
    <citation type="journal article" date="2011" name="J. Bacteriol.">
        <title>Comparative genomics of 28 Salmonella enterica isolates: evidence for CRISPR-mediated adaptive sublineage evolution.</title>
        <authorList>
            <person name="Fricke W.F."/>
            <person name="Mammel M.K."/>
            <person name="McDermott P.F."/>
            <person name="Tartera C."/>
            <person name="White D.G."/>
            <person name="Leclerc J.E."/>
            <person name="Ravel J."/>
            <person name="Cebula T.A."/>
        </authorList>
    </citation>
    <scope>NUCLEOTIDE SEQUENCE [LARGE SCALE GENOMIC DNA]</scope>
    <source>
        <strain>CT_02021853</strain>
    </source>
</reference>
<evidence type="ECO:0000255" key="1">
    <source>
        <dbReference type="HAMAP-Rule" id="MF_00297"/>
    </source>
</evidence>
<comment type="function">
    <text evidence="1">mRNA decapping enzyme that specifically removes the nicotinamide adenine dinucleotide (NAD) cap from a subset of mRNAs by hydrolyzing the diphosphate linkage to produce nicotinamide mononucleotide (NMN) and 5' monophosphate mRNA. The NAD-cap is present at the 5'-end of some mRNAs and stabilizes RNA against 5'-processing. Has preference for mRNAs with a 5'-end purine. Catalyzes the hydrolysis of a broad range of dinucleotide pyrophosphates.</text>
</comment>
<comment type="catalytic activity">
    <reaction evidence="1">
        <text>a 5'-end NAD(+)-phospho-ribonucleoside in mRNA + H2O = a 5'-end phospho-adenosine-phospho-ribonucleoside in mRNA + beta-nicotinamide D-ribonucleotide + 2 H(+)</text>
        <dbReference type="Rhea" id="RHEA:60876"/>
        <dbReference type="Rhea" id="RHEA-COMP:15698"/>
        <dbReference type="Rhea" id="RHEA-COMP:15719"/>
        <dbReference type="ChEBI" id="CHEBI:14649"/>
        <dbReference type="ChEBI" id="CHEBI:15377"/>
        <dbReference type="ChEBI" id="CHEBI:15378"/>
        <dbReference type="ChEBI" id="CHEBI:144029"/>
        <dbReference type="ChEBI" id="CHEBI:144051"/>
    </reaction>
    <physiologicalReaction direction="left-to-right" evidence="1">
        <dbReference type="Rhea" id="RHEA:60877"/>
    </physiologicalReaction>
</comment>
<comment type="catalytic activity">
    <reaction evidence="1">
        <text>NAD(+) + H2O = beta-nicotinamide D-ribonucleotide + AMP + 2 H(+)</text>
        <dbReference type="Rhea" id="RHEA:11800"/>
        <dbReference type="ChEBI" id="CHEBI:14649"/>
        <dbReference type="ChEBI" id="CHEBI:15377"/>
        <dbReference type="ChEBI" id="CHEBI:15378"/>
        <dbReference type="ChEBI" id="CHEBI:57540"/>
        <dbReference type="ChEBI" id="CHEBI:456215"/>
        <dbReference type="EC" id="3.6.1.22"/>
    </reaction>
</comment>
<comment type="catalytic activity">
    <reaction evidence="1">
        <text>NADH + H2O = reduced beta-nicotinamide D-ribonucleotide + AMP + 2 H(+)</text>
        <dbReference type="Rhea" id="RHEA:48868"/>
        <dbReference type="ChEBI" id="CHEBI:15377"/>
        <dbReference type="ChEBI" id="CHEBI:15378"/>
        <dbReference type="ChEBI" id="CHEBI:57945"/>
        <dbReference type="ChEBI" id="CHEBI:90832"/>
        <dbReference type="ChEBI" id="CHEBI:456215"/>
        <dbReference type="EC" id="3.6.1.22"/>
    </reaction>
</comment>
<comment type="cofactor">
    <cofactor evidence="1">
        <name>Mg(2+)</name>
        <dbReference type="ChEBI" id="CHEBI:18420"/>
    </cofactor>
    <cofactor evidence="1">
        <name>Mn(2+)</name>
        <dbReference type="ChEBI" id="CHEBI:29035"/>
    </cofactor>
    <text evidence="1">Divalent metal cations. Mg(2+) or Mn(2+).</text>
</comment>
<comment type="cofactor">
    <cofactor evidence="1">
        <name>Zn(2+)</name>
        <dbReference type="ChEBI" id="CHEBI:29105"/>
    </cofactor>
    <text evidence="1">Binds 1 zinc ion per subunit.</text>
</comment>
<comment type="subunit">
    <text evidence="1">Homodimer.</text>
</comment>
<comment type="similarity">
    <text evidence="1">Belongs to the Nudix hydrolase family. NudC subfamily.</text>
</comment>
<organism>
    <name type="scientific">Salmonella dublin (strain CT_02021853)</name>
    <dbReference type="NCBI Taxonomy" id="439851"/>
    <lineage>
        <taxon>Bacteria</taxon>
        <taxon>Pseudomonadati</taxon>
        <taxon>Pseudomonadota</taxon>
        <taxon>Gammaproteobacteria</taxon>
        <taxon>Enterobacterales</taxon>
        <taxon>Enterobacteriaceae</taxon>
        <taxon>Salmonella</taxon>
    </lineage>
</organism>
<name>NUDC_SALDC</name>
<proteinExistence type="inferred from homology"/>
<accession>B5FQL1</accession>
<dbReference type="EC" id="3.6.1.-" evidence="1"/>
<dbReference type="EC" id="3.6.1.22" evidence="1"/>
<dbReference type="EMBL" id="CP001144">
    <property type="protein sequence ID" value="ACH74052.1"/>
    <property type="molecule type" value="Genomic_DNA"/>
</dbReference>
<dbReference type="RefSeq" id="WP_000373958.1">
    <property type="nucleotide sequence ID" value="NC_011205.1"/>
</dbReference>
<dbReference type="SMR" id="B5FQL1"/>
<dbReference type="KEGG" id="sed:SeD_A4573"/>
<dbReference type="HOGENOM" id="CLU_037162_0_1_6"/>
<dbReference type="Proteomes" id="UP000008322">
    <property type="component" value="Chromosome"/>
</dbReference>
<dbReference type="GO" id="GO:0005829">
    <property type="term" value="C:cytosol"/>
    <property type="evidence" value="ECO:0007669"/>
    <property type="project" value="TreeGrafter"/>
</dbReference>
<dbReference type="GO" id="GO:0000287">
    <property type="term" value="F:magnesium ion binding"/>
    <property type="evidence" value="ECO:0007669"/>
    <property type="project" value="UniProtKB-UniRule"/>
</dbReference>
<dbReference type="GO" id="GO:0030145">
    <property type="term" value="F:manganese ion binding"/>
    <property type="evidence" value="ECO:0007669"/>
    <property type="project" value="UniProtKB-UniRule"/>
</dbReference>
<dbReference type="GO" id="GO:0000210">
    <property type="term" value="F:NAD+ diphosphatase activity"/>
    <property type="evidence" value="ECO:0007669"/>
    <property type="project" value="UniProtKB-UniRule"/>
</dbReference>
<dbReference type="GO" id="GO:0035529">
    <property type="term" value="F:NADH pyrophosphatase activity"/>
    <property type="evidence" value="ECO:0007669"/>
    <property type="project" value="TreeGrafter"/>
</dbReference>
<dbReference type="GO" id="GO:0110153">
    <property type="term" value="F:RNA NAD-cap (NMN-forming) hydrolase activity"/>
    <property type="evidence" value="ECO:0007669"/>
    <property type="project" value="RHEA"/>
</dbReference>
<dbReference type="GO" id="GO:0008270">
    <property type="term" value="F:zinc ion binding"/>
    <property type="evidence" value="ECO:0007669"/>
    <property type="project" value="UniProtKB-UniRule"/>
</dbReference>
<dbReference type="GO" id="GO:0019677">
    <property type="term" value="P:NAD catabolic process"/>
    <property type="evidence" value="ECO:0007669"/>
    <property type="project" value="TreeGrafter"/>
</dbReference>
<dbReference type="GO" id="GO:0006734">
    <property type="term" value="P:NADH metabolic process"/>
    <property type="evidence" value="ECO:0007669"/>
    <property type="project" value="TreeGrafter"/>
</dbReference>
<dbReference type="GO" id="GO:0006742">
    <property type="term" value="P:NADP catabolic process"/>
    <property type="evidence" value="ECO:0007669"/>
    <property type="project" value="TreeGrafter"/>
</dbReference>
<dbReference type="CDD" id="cd03429">
    <property type="entry name" value="NUDIX_NADH_pyrophosphatase_Nudt13"/>
    <property type="match status" value="1"/>
</dbReference>
<dbReference type="FunFam" id="3.90.79.10:FF:000004">
    <property type="entry name" value="NADH pyrophosphatase"/>
    <property type="match status" value="1"/>
</dbReference>
<dbReference type="FunFam" id="3.90.79.20:FF:000001">
    <property type="entry name" value="NADH pyrophosphatase"/>
    <property type="match status" value="1"/>
</dbReference>
<dbReference type="Gene3D" id="3.90.79.20">
    <property type="match status" value="1"/>
</dbReference>
<dbReference type="Gene3D" id="3.90.79.10">
    <property type="entry name" value="Nucleoside Triphosphate Pyrophosphohydrolase"/>
    <property type="match status" value="1"/>
</dbReference>
<dbReference type="HAMAP" id="MF_00297">
    <property type="entry name" value="Nudix_NudC"/>
    <property type="match status" value="1"/>
</dbReference>
<dbReference type="InterPro" id="IPR050241">
    <property type="entry name" value="NAD-cap_RNA_hydrolase_NudC"/>
</dbReference>
<dbReference type="InterPro" id="IPR049734">
    <property type="entry name" value="NudC-like_C"/>
</dbReference>
<dbReference type="InterPro" id="IPR015797">
    <property type="entry name" value="NUDIX_hydrolase-like_dom_sf"/>
</dbReference>
<dbReference type="InterPro" id="IPR020084">
    <property type="entry name" value="NUDIX_hydrolase_CS"/>
</dbReference>
<dbReference type="InterPro" id="IPR000086">
    <property type="entry name" value="NUDIX_hydrolase_dom"/>
</dbReference>
<dbReference type="InterPro" id="IPR022925">
    <property type="entry name" value="RNA_Hydrolase_NudC"/>
</dbReference>
<dbReference type="InterPro" id="IPR015376">
    <property type="entry name" value="Znr_NADH_PPase"/>
</dbReference>
<dbReference type="NCBIfam" id="NF001299">
    <property type="entry name" value="PRK00241.1"/>
    <property type="match status" value="1"/>
</dbReference>
<dbReference type="PANTHER" id="PTHR42904:SF6">
    <property type="entry name" value="NAD-CAPPED RNA HYDROLASE NUDT12"/>
    <property type="match status" value="1"/>
</dbReference>
<dbReference type="PANTHER" id="PTHR42904">
    <property type="entry name" value="NUDIX HYDROLASE, NUDC SUBFAMILY"/>
    <property type="match status" value="1"/>
</dbReference>
<dbReference type="Pfam" id="PF00293">
    <property type="entry name" value="NUDIX"/>
    <property type="match status" value="1"/>
</dbReference>
<dbReference type="Pfam" id="PF09297">
    <property type="entry name" value="Zn_ribbon_NUD"/>
    <property type="match status" value="1"/>
</dbReference>
<dbReference type="SUPFAM" id="SSF55811">
    <property type="entry name" value="Nudix"/>
    <property type="match status" value="2"/>
</dbReference>
<dbReference type="PROSITE" id="PS51462">
    <property type="entry name" value="NUDIX"/>
    <property type="match status" value="1"/>
</dbReference>
<dbReference type="PROSITE" id="PS00893">
    <property type="entry name" value="NUDIX_BOX"/>
    <property type="match status" value="1"/>
</dbReference>
<protein>
    <recommendedName>
        <fullName evidence="1">NAD-capped RNA hydrolase NudC</fullName>
        <shortName evidence="1">DeNADding enzyme NudC</shortName>
        <ecNumber evidence="1">3.6.1.-</ecNumber>
    </recommendedName>
    <alternativeName>
        <fullName evidence="1">NADH pyrophosphatase</fullName>
        <ecNumber evidence="1">3.6.1.22</ecNumber>
    </alternativeName>
</protein>
<sequence length="257" mass="29607">MDRIIEKLESGWWIVSHEQKLWLPYGELPHGLAANFDLVGQRALRIGEWQGEPVWLVLQHRRHDMGSVRQVIDQDAGLFQLAGRGVQLAEFYRSHKFCGYCGHPMHPSKTEWAMLCSHCRERYYPQIAPCIIVAIRREDSILLAQHVRHRNGVHTVLAGFVEVGETLEQAVAREVMEESGIKVKNLRYVTSQPWPFPQSLMTAFMAEYDSGEIVIDPKELLEANWYRYDDLPLLPPPGTVARRLIEDTVAMCRAEYD</sequence>